<keyword id="KW-0878">Amphibian defense peptide</keyword>
<keyword id="KW-0044">Antibiotic</keyword>
<keyword id="KW-0929">Antimicrobial</keyword>
<keyword id="KW-0903">Direct protein sequencing</keyword>
<keyword id="KW-0295">Fungicide</keyword>
<keyword id="KW-0391">Immunity</keyword>
<keyword id="KW-0399">Innate immunity</keyword>
<keyword id="KW-0964">Secreted</keyword>
<evidence type="ECO:0000269" key="1">
    <source>
    </source>
</evidence>
<evidence type="ECO:0000303" key="2">
    <source>
    </source>
</evidence>
<evidence type="ECO:0000305" key="3"/>
<evidence type="ECO:0000305" key="4">
    <source>
    </source>
</evidence>
<dbReference type="GO" id="GO:0005576">
    <property type="term" value="C:extracellular region"/>
    <property type="evidence" value="ECO:0007669"/>
    <property type="project" value="UniProtKB-SubCell"/>
</dbReference>
<dbReference type="GO" id="GO:0042742">
    <property type="term" value="P:defense response to bacterium"/>
    <property type="evidence" value="ECO:0007669"/>
    <property type="project" value="UniProtKB-KW"/>
</dbReference>
<dbReference type="GO" id="GO:0050832">
    <property type="term" value="P:defense response to fungus"/>
    <property type="evidence" value="ECO:0000314"/>
    <property type="project" value="UniProtKB"/>
</dbReference>
<dbReference type="GO" id="GO:0045087">
    <property type="term" value="P:innate immune response"/>
    <property type="evidence" value="ECO:0007669"/>
    <property type="project" value="UniProtKB-KW"/>
</dbReference>
<dbReference type="GO" id="GO:0031640">
    <property type="term" value="P:killing of cells of another organism"/>
    <property type="evidence" value="ECO:0007669"/>
    <property type="project" value="UniProtKB-KW"/>
</dbReference>
<dbReference type="GO" id="GO:0006805">
    <property type="term" value="P:xenobiotic metabolic process"/>
    <property type="evidence" value="ECO:0000314"/>
    <property type="project" value="UniProtKB"/>
</dbReference>
<dbReference type="InterPro" id="IPR013156">
    <property type="entry name" value="Antimicrobial_19"/>
</dbReference>
<dbReference type="Pfam" id="PF08225">
    <property type="entry name" value="Antimicrobial19"/>
    <property type="match status" value="1"/>
</dbReference>
<name>PS3_PSEPD</name>
<organism>
    <name type="scientific">Pseudis paradoxa</name>
    <name type="common">Paradoxical frog</name>
    <dbReference type="NCBI Taxonomy" id="43558"/>
    <lineage>
        <taxon>Eukaryota</taxon>
        <taxon>Metazoa</taxon>
        <taxon>Chordata</taxon>
        <taxon>Craniata</taxon>
        <taxon>Vertebrata</taxon>
        <taxon>Euteleostomi</taxon>
        <taxon>Amphibia</taxon>
        <taxon>Batrachia</taxon>
        <taxon>Anura</taxon>
        <taxon>Neobatrachia</taxon>
        <taxon>Hyloidea</taxon>
        <taxon>Hylidae</taxon>
        <taxon>Hylinae</taxon>
        <taxon>Dendropsophini</taxon>
        <taxon>Pseudis</taxon>
    </lineage>
</organism>
<protein>
    <recommendedName>
        <fullName evidence="2">Pseudin-3</fullName>
    </recommendedName>
</protein>
<comment type="function">
    <text evidence="1">Possesses antifungal activity against C.albicans and is also active against E.coli and S.aureus.</text>
</comment>
<comment type="subcellular location">
    <subcellularLocation>
        <location evidence="1">Secreted</location>
    </subcellularLocation>
</comment>
<comment type="tissue specificity">
    <text evidence="4">Expressed by the skin glands.</text>
</comment>
<comment type="mass spectrometry" mass="2569.6" method="Electrospray" evidence="1"/>
<comment type="similarity">
    <text evidence="3">Belongs to the frog skin active peptide (FSAP) family. Pseudin subfamily.</text>
</comment>
<comment type="online information" name="The antimicrobial peptide database">
    <link uri="https://wangapd3.com/database/query_output.php?ID=00477"/>
</comment>
<proteinExistence type="evidence at protein level"/>
<sequence length="23" mass="2570">GINTLKKVIQGLHEVIKLVSNHE</sequence>
<reference key="1">
    <citation type="journal article" date="2001" name="Biochem. Biophys. Res. Commun.">
        <title>Pseudin-2: an antimicrobial peptide with low hemolytic activity from the skin of the paradoxical frog.</title>
        <authorList>
            <person name="Olson L. III"/>
            <person name="Soto A.M."/>
            <person name="Knoop F.C."/>
            <person name="Conlon J.M."/>
        </authorList>
    </citation>
    <scope>PROTEIN SEQUENCE</scope>
    <scope>FUNCTION</scope>
    <scope>MASS SPECTROMETRY</scope>
    <scope>SUBCELLULAR LOCATION</scope>
    <source>
        <tissue>Skin secretion</tissue>
    </source>
</reference>
<accession>P83190</accession>
<feature type="peptide" id="PRO_0000043830" description="Pseudin-3" evidence="1">
    <location>
        <begin position="1"/>
        <end position="23"/>
    </location>
</feature>